<name>PUR9_RUMCH</name>
<accession>B8I490</accession>
<sequence length="514" mass="56148">MIKRALISVSDKTGIVEFASALASKGIEIISTGGTAKALSAAGLKVINISDITGFPECLDGRVKTLHPKVHAGLLAIRSNEEHMKQIKELGVETIDMVIINLYPFKQTILKGNVELEEAIENIDIGGPTMLRAAAKNYQDVAVIVDPADYKNVLNEMNESGDVSVKTKFRLAYKVFEHTSHYDTLIAKYLRDTLGDIDFPETLSLTYEKAQDMRYGENPHQKAVFYKEVGANTGLLPSAVQLHGKELSFNNINDTNGAIELVKEFDEPTVVAVKHTNPCGVGSADNIYDAYMRAYESDPVSIFGGIIAANREIDAKTAEEINKIFVEIVVAPSFTEDALAVLTQKKNVRLLKLENITDEISPDAYDMKKVAGGLLVQKYNSQLFNQEDLKCVTDVQPTKEQMEDLVFAMKVVKHTKSNAITLAKGKMTIGVGPGQTNRIVPTKVSIEYAGERSQGAVMASDAYFPFSDCVEAAAAAGIKAIIQPGGSIRDQESIDACNKYGIAMVFTGMRHFKH</sequence>
<proteinExistence type="inferred from homology"/>
<comment type="catalytic activity">
    <reaction evidence="1">
        <text>(6R)-10-formyltetrahydrofolate + 5-amino-1-(5-phospho-beta-D-ribosyl)imidazole-4-carboxamide = 5-formamido-1-(5-phospho-D-ribosyl)imidazole-4-carboxamide + (6S)-5,6,7,8-tetrahydrofolate</text>
        <dbReference type="Rhea" id="RHEA:22192"/>
        <dbReference type="ChEBI" id="CHEBI:57453"/>
        <dbReference type="ChEBI" id="CHEBI:58467"/>
        <dbReference type="ChEBI" id="CHEBI:58475"/>
        <dbReference type="ChEBI" id="CHEBI:195366"/>
        <dbReference type="EC" id="2.1.2.3"/>
    </reaction>
</comment>
<comment type="catalytic activity">
    <reaction evidence="1">
        <text>IMP + H2O = 5-formamido-1-(5-phospho-D-ribosyl)imidazole-4-carboxamide</text>
        <dbReference type="Rhea" id="RHEA:18445"/>
        <dbReference type="ChEBI" id="CHEBI:15377"/>
        <dbReference type="ChEBI" id="CHEBI:58053"/>
        <dbReference type="ChEBI" id="CHEBI:58467"/>
        <dbReference type="EC" id="3.5.4.10"/>
    </reaction>
</comment>
<comment type="pathway">
    <text evidence="1">Purine metabolism; IMP biosynthesis via de novo pathway; 5-formamido-1-(5-phospho-D-ribosyl)imidazole-4-carboxamide from 5-amino-1-(5-phospho-D-ribosyl)imidazole-4-carboxamide (10-formyl THF route): step 1/1.</text>
</comment>
<comment type="pathway">
    <text evidence="1">Purine metabolism; IMP biosynthesis via de novo pathway; IMP from 5-formamido-1-(5-phospho-D-ribosyl)imidazole-4-carboxamide: step 1/1.</text>
</comment>
<comment type="domain">
    <text evidence="1">The IMP cyclohydrolase activity resides in the N-terminal region.</text>
</comment>
<comment type="similarity">
    <text evidence="1">Belongs to the PurH family.</text>
</comment>
<evidence type="ECO:0000255" key="1">
    <source>
        <dbReference type="HAMAP-Rule" id="MF_00139"/>
    </source>
</evidence>
<evidence type="ECO:0000255" key="2">
    <source>
        <dbReference type="PROSITE-ProRule" id="PRU01202"/>
    </source>
</evidence>
<dbReference type="EC" id="2.1.2.3" evidence="1"/>
<dbReference type="EC" id="3.5.4.10" evidence="1"/>
<dbReference type="EMBL" id="CP001348">
    <property type="protein sequence ID" value="ACL76523.1"/>
    <property type="molecule type" value="Genomic_DNA"/>
</dbReference>
<dbReference type="RefSeq" id="WP_015925618.1">
    <property type="nucleotide sequence ID" value="NC_011898.1"/>
</dbReference>
<dbReference type="SMR" id="B8I490"/>
<dbReference type="STRING" id="394503.Ccel_2181"/>
<dbReference type="KEGG" id="cce:Ccel_2181"/>
<dbReference type="eggNOG" id="COG0138">
    <property type="taxonomic scope" value="Bacteria"/>
</dbReference>
<dbReference type="HOGENOM" id="CLU_016316_5_2_9"/>
<dbReference type="OrthoDB" id="9802065at2"/>
<dbReference type="UniPathway" id="UPA00074">
    <property type="reaction ID" value="UER00133"/>
</dbReference>
<dbReference type="UniPathway" id="UPA00074">
    <property type="reaction ID" value="UER00135"/>
</dbReference>
<dbReference type="Proteomes" id="UP000001349">
    <property type="component" value="Chromosome"/>
</dbReference>
<dbReference type="GO" id="GO:0005829">
    <property type="term" value="C:cytosol"/>
    <property type="evidence" value="ECO:0007669"/>
    <property type="project" value="TreeGrafter"/>
</dbReference>
<dbReference type="GO" id="GO:0003937">
    <property type="term" value="F:IMP cyclohydrolase activity"/>
    <property type="evidence" value="ECO:0007669"/>
    <property type="project" value="UniProtKB-UniRule"/>
</dbReference>
<dbReference type="GO" id="GO:0004643">
    <property type="term" value="F:phosphoribosylaminoimidazolecarboxamide formyltransferase activity"/>
    <property type="evidence" value="ECO:0007669"/>
    <property type="project" value="UniProtKB-UniRule"/>
</dbReference>
<dbReference type="GO" id="GO:0006189">
    <property type="term" value="P:'de novo' IMP biosynthetic process"/>
    <property type="evidence" value="ECO:0007669"/>
    <property type="project" value="UniProtKB-UniRule"/>
</dbReference>
<dbReference type="CDD" id="cd01421">
    <property type="entry name" value="IMPCH"/>
    <property type="match status" value="1"/>
</dbReference>
<dbReference type="FunFam" id="3.40.140.20:FF:000001">
    <property type="entry name" value="Bifunctional purine biosynthesis protein PurH"/>
    <property type="match status" value="1"/>
</dbReference>
<dbReference type="FunFam" id="3.40.140.20:FF:000002">
    <property type="entry name" value="Bifunctional purine biosynthesis protein PurH"/>
    <property type="match status" value="1"/>
</dbReference>
<dbReference type="FunFam" id="3.40.50.1380:FF:000001">
    <property type="entry name" value="Bifunctional purine biosynthesis protein PurH"/>
    <property type="match status" value="1"/>
</dbReference>
<dbReference type="Gene3D" id="3.40.140.20">
    <property type="match status" value="2"/>
</dbReference>
<dbReference type="Gene3D" id="3.40.50.1380">
    <property type="entry name" value="Methylglyoxal synthase-like domain"/>
    <property type="match status" value="1"/>
</dbReference>
<dbReference type="HAMAP" id="MF_00139">
    <property type="entry name" value="PurH"/>
    <property type="match status" value="1"/>
</dbReference>
<dbReference type="InterPro" id="IPR024051">
    <property type="entry name" value="AICAR_Tfase_dup_dom_sf"/>
</dbReference>
<dbReference type="InterPro" id="IPR016193">
    <property type="entry name" value="Cytidine_deaminase-like"/>
</dbReference>
<dbReference type="InterPro" id="IPR011607">
    <property type="entry name" value="MGS-like_dom"/>
</dbReference>
<dbReference type="InterPro" id="IPR036914">
    <property type="entry name" value="MGS-like_dom_sf"/>
</dbReference>
<dbReference type="InterPro" id="IPR002695">
    <property type="entry name" value="PurH-like"/>
</dbReference>
<dbReference type="NCBIfam" id="NF002049">
    <property type="entry name" value="PRK00881.1"/>
    <property type="match status" value="1"/>
</dbReference>
<dbReference type="NCBIfam" id="TIGR00355">
    <property type="entry name" value="purH"/>
    <property type="match status" value="1"/>
</dbReference>
<dbReference type="PANTHER" id="PTHR11692:SF0">
    <property type="entry name" value="BIFUNCTIONAL PURINE BIOSYNTHESIS PROTEIN ATIC"/>
    <property type="match status" value="1"/>
</dbReference>
<dbReference type="PANTHER" id="PTHR11692">
    <property type="entry name" value="BIFUNCTIONAL PURINE BIOSYNTHESIS PROTEIN PURH"/>
    <property type="match status" value="1"/>
</dbReference>
<dbReference type="Pfam" id="PF01808">
    <property type="entry name" value="AICARFT_IMPCHas"/>
    <property type="match status" value="1"/>
</dbReference>
<dbReference type="Pfam" id="PF02142">
    <property type="entry name" value="MGS"/>
    <property type="match status" value="1"/>
</dbReference>
<dbReference type="PIRSF" id="PIRSF000414">
    <property type="entry name" value="AICARFT_IMPCHas"/>
    <property type="match status" value="1"/>
</dbReference>
<dbReference type="SMART" id="SM00798">
    <property type="entry name" value="AICARFT_IMPCHas"/>
    <property type="match status" value="1"/>
</dbReference>
<dbReference type="SMART" id="SM00851">
    <property type="entry name" value="MGS"/>
    <property type="match status" value="1"/>
</dbReference>
<dbReference type="SUPFAM" id="SSF53927">
    <property type="entry name" value="Cytidine deaminase-like"/>
    <property type="match status" value="1"/>
</dbReference>
<dbReference type="SUPFAM" id="SSF52335">
    <property type="entry name" value="Methylglyoxal synthase-like"/>
    <property type="match status" value="1"/>
</dbReference>
<dbReference type="PROSITE" id="PS51855">
    <property type="entry name" value="MGS"/>
    <property type="match status" value="1"/>
</dbReference>
<keyword id="KW-0378">Hydrolase</keyword>
<keyword id="KW-0511">Multifunctional enzyme</keyword>
<keyword id="KW-0658">Purine biosynthesis</keyword>
<keyword id="KW-1185">Reference proteome</keyword>
<keyword id="KW-0808">Transferase</keyword>
<gene>
    <name evidence="1" type="primary">purH</name>
    <name type="ordered locus">Ccel_2181</name>
</gene>
<organism>
    <name type="scientific">Ruminiclostridium cellulolyticum (strain ATCC 35319 / DSM 5812 / JCM 6584 / H10)</name>
    <name type="common">Clostridium cellulolyticum</name>
    <dbReference type="NCBI Taxonomy" id="394503"/>
    <lineage>
        <taxon>Bacteria</taxon>
        <taxon>Bacillati</taxon>
        <taxon>Bacillota</taxon>
        <taxon>Clostridia</taxon>
        <taxon>Eubacteriales</taxon>
        <taxon>Oscillospiraceae</taxon>
        <taxon>Ruminiclostridium</taxon>
    </lineage>
</organism>
<feature type="chain" id="PRO_1000122953" description="Bifunctional purine biosynthesis protein PurH">
    <location>
        <begin position="1"/>
        <end position="514"/>
    </location>
</feature>
<feature type="domain" description="MGS-like" evidence="2">
    <location>
        <begin position="1"/>
        <end position="145"/>
    </location>
</feature>
<reference key="1">
    <citation type="submission" date="2009-01" db="EMBL/GenBank/DDBJ databases">
        <title>Complete sequence of Clostridium cellulolyticum H10.</title>
        <authorList>
            <consortium name="US DOE Joint Genome Institute"/>
            <person name="Lucas S."/>
            <person name="Copeland A."/>
            <person name="Lapidus A."/>
            <person name="Glavina del Rio T."/>
            <person name="Dalin E."/>
            <person name="Tice H."/>
            <person name="Bruce D."/>
            <person name="Goodwin L."/>
            <person name="Pitluck S."/>
            <person name="Chertkov O."/>
            <person name="Saunders E."/>
            <person name="Brettin T."/>
            <person name="Detter J.C."/>
            <person name="Han C."/>
            <person name="Larimer F."/>
            <person name="Land M."/>
            <person name="Hauser L."/>
            <person name="Kyrpides N."/>
            <person name="Ivanova N."/>
            <person name="Zhou J."/>
            <person name="Richardson P."/>
        </authorList>
    </citation>
    <scope>NUCLEOTIDE SEQUENCE [LARGE SCALE GENOMIC DNA]</scope>
    <source>
        <strain>ATCC 35319 / DSM 5812 / JCM 6584 / H10</strain>
    </source>
</reference>
<protein>
    <recommendedName>
        <fullName evidence="1">Bifunctional purine biosynthesis protein PurH</fullName>
    </recommendedName>
    <domain>
        <recommendedName>
            <fullName evidence="1">Phosphoribosylaminoimidazolecarboxamide formyltransferase</fullName>
            <ecNumber evidence="1">2.1.2.3</ecNumber>
        </recommendedName>
        <alternativeName>
            <fullName evidence="1">AICAR transformylase</fullName>
        </alternativeName>
    </domain>
    <domain>
        <recommendedName>
            <fullName evidence="1">IMP cyclohydrolase</fullName>
            <ecNumber evidence="1">3.5.4.10</ecNumber>
        </recommendedName>
        <alternativeName>
            <fullName evidence="1">ATIC</fullName>
        </alternativeName>
        <alternativeName>
            <fullName evidence="1">IMP synthase</fullName>
        </alternativeName>
        <alternativeName>
            <fullName evidence="1">Inosinicase</fullName>
        </alternativeName>
    </domain>
</protein>